<feature type="chain" id="PRO_0000223014" description="Protein F-93">
    <location>
        <begin position="1"/>
        <end position="93"/>
    </location>
</feature>
<feature type="strand" evidence="2">
    <location>
        <begin position="5"/>
        <end position="7"/>
    </location>
</feature>
<feature type="helix" evidence="2">
    <location>
        <begin position="9"/>
        <end position="17"/>
    </location>
</feature>
<feature type="helix" evidence="2">
    <location>
        <begin position="25"/>
        <end position="33"/>
    </location>
</feature>
<feature type="helix" evidence="2">
    <location>
        <begin position="40"/>
        <end position="52"/>
    </location>
</feature>
<feature type="strand" evidence="2">
    <location>
        <begin position="55"/>
        <end position="61"/>
    </location>
</feature>
<feature type="strand" evidence="2">
    <location>
        <begin position="64"/>
        <end position="69"/>
    </location>
</feature>
<feature type="helix" evidence="2">
    <location>
        <begin position="71"/>
        <end position="93"/>
    </location>
</feature>
<keyword id="KW-0002">3D-structure</keyword>
<keyword id="KW-0238">DNA-binding</keyword>
<keyword id="KW-1185">Reference proteome</keyword>
<keyword id="KW-0804">Transcription</keyword>
<keyword id="KW-0805">Transcription regulation</keyword>
<organismHost>
    <name type="scientific">Saccharolobus solfataricus</name>
    <name type="common">Sulfolobus solfataricus</name>
    <dbReference type="NCBI Taxonomy" id="2287"/>
</organismHost>
<name>F93_SSV1</name>
<evidence type="ECO:0000269" key="1">
    <source>
    </source>
</evidence>
<evidence type="ECO:0007829" key="2">
    <source>
        <dbReference type="PDB" id="1TBX"/>
    </source>
</evidence>
<proteinExistence type="evidence at protein level"/>
<organism>
    <name type="scientific">Sulfolobus spindle-shape virus 1</name>
    <name type="common">SSV1</name>
    <dbReference type="NCBI Taxonomy" id="244589"/>
    <lineage>
        <taxon>Viruses</taxon>
        <taxon>Viruses incertae sedis</taxon>
        <taxon>Fuselloviridae</taxon>
        <taxon>Alphafusellovirus</taxon>
    </lineage>
</organism>
<accession>P20222</accession>
<comment type="function">
    <text>Probable transcription factor that recognizes a (pseudo-)palindromic DNA target sequence.</text>
</comment>
<comment type="subunit">
    <text evidence="1">Homodimer.</text>
</comment>
<gene>
    <name type="ORF">f93</name>
</gene>
<protein>
    <recommendedName>
        <fullName>Protein F-93</fullName>
    </recommendedName>
</protein>
<sequence>MKSTPFFYPEAIVLAYLYDNEGIATYDLYKKVNAEFPMSTATFYDAKKFLIQEGFVKERQERGEKRLYLTEKGKLFAISLKTAIETYKQIKKR</sequence>
<dbReference type="EMBL" id="X07234">
    <property type="protein sequence ID" value="CAA30216.1"/>
    <property type="molecule type" value="Genomic_DNA"/>
</dbReference>
<dbReference type="PIR" id="S03217">
    <property type="entry name" value="S03217"/>
</dbReference>
<dbReference type="RefSeq" id="NP_039783.1">
    <property type="nucleotide sequence ID" value="NC_001338.1"/>
</dbReference>
<dbReference type="PDB" id="1TBX">
    <property type="method" value="X-ray"/>
    <property type="resolution" value="2.70 A"/>
    <property type="chains" value="A/B=1-93"/>
</dbReference>
<dbReference type="PDBsum" id="1TBX"/>
<dbReference type="SMR" id="P20222"/>
<dbReference type="KEGG" id="vg:2559634"/>
<dbReference type="EvolutionaryTrace" id="P20222"/>
<dbReference type="Proteomes" id="UP000000854">
    <property type="component" value="Genome"/>
</dbReference>
<dbReference type="GO" id="GO:0003677">
    <property type="term" value="F:DNA binding"/>
    <property type="evidence" value="ECO:0007669"/>
    <property type="project" value="UniProtKB-KW"/>
</dbReference>
<dbReference type="Gene3D" id="1.10.10.10">
    <property type="entry name" value="Winged helix-like DNA-binding domain superfamily/Winged helix DNA-binding domain"/>
    <property type="match status" value="1"/>
</dbReference>
<dbReference type="InterPro" id="IPR054020">
    <property type="entry name" value="F-93_WHD"/>
</dbReference>
<dbReference type="InterPro" id="IPR036388">
    <property type="entry name" value="WH-like_DNA-bd_sf"/>
</dbReference>
<dbReference type="InterPro" id="IPR036390">
    <property type="entry name" value="WH_DNA-bd_sf"/>
</dbReference>
<dbReference type="Pfam" id="PF22194">
    <property type="entry name" value="F-93_WHD"/>
    <property type="match status" value="1"/>
</dbReference>
<dbReference type="SUPFAM" id="SSF46785">
    <property type="entry name" value="Winged helix' DNA-binding domain"/>
    <property type="match status" value="1"/>
</dbReference>
<reference key="1">
    <citation type="journal article" date="1991" name="Virology">
        <title>Complete nucleotide sequence of the virus SSV1 of the archaebacterium Sulfolobus shibatae.</title>
        <authorList>
            <person name="Palm P."/>
            <person name="Schleper C."/>
            <person name="Grampp B."/>
            <person name="Yeats S."/>
            <person name="McWilliam P."/>
            <person name="Reiter W.-D."/>
            <person name="Zillig W."/>
        </authorList>
    </citation>
    <scope>NUCLEOTIDE SEQUENCE [GENOMIC DNA]</scope>
</reference>
<reference key="2">
    <citation type="journal article" date="2004" name="J. Virol.">
        <title>Crystal structure of F-93 from Sulfolobus spindle-shaped virus 1, a winged-helix DNA binding protein.</title>
        <authorList>
            <person name="Kraft P."/>
            <person name="Oeckinghaus A."/>
            <person name="Kummel D."/>
            <person name="Gauss G.H."/>
            <person name="Gilmore J."/>
            <person name="Wiedenheft B."/>
            <person name="Young M."/>
            <person name="Lawrence C.M."/>
        </authorList>
    </citation>
    <scope>X-RAY CRYSTALLOGRAPHY (2.7 ANGSTROMS) OF 2-93</scope>
    <scope>SUBUNIT</scope>
    <scope>PUTATIVE FUNCTION</scope>
</reference>